<name>SYP_KINRD</name>
<organism>
    <name type="scientific">Kineococcus radiotolerans (strain ATCC BAA-149 / DSM 14245 / SRS30216)</name>
    <dbReference type="NCBI Taxonomy" id="266940"/>
    <lineage>
        <taxon>Bacteria</taxon>
        <taxon>Bacillati</taxon>
        <taxon>Actinomycetota</taxon>
        <taxon>Actinomycetes</taxon>
        <taxon>Kineosporiales</taxon>
        <taxon>Kineosporiaceae</taxon>
        <taxon>Kineococcus</taxon>
    </lineage>
</organism>
<reference key="1">
    <citation type="journal article" date="2008" name="PLoS ONE">
        <title>Survival in nuclear waste, extreme resistance, and potential applications gleaned from the genome sequence of Kineococcus radiotolerans SRS30216.</title>
        <authorList>
            <person name="Bagwell C.E."/>
            <person name="Bhat S."/>
            <person name="Hawkins G.M."/>
            <person name="Smith B.W."/>
            <person name="Biswas T."/>
            <person name="Hoover T.R."/>
            <person name="Saunders E."/>
            <person name="Han C.S."/>
            <person name="Tsodikov O.V."/>
            <person name="Shimkets L.J."/>
        </authorList>
    </citation>
    <scope>NUCLEOTIDE SEQUENCE [LARGE SCALE GENOMIC DNA]</scope>
    <source>
        <strain>ATCC BAA-149 / DSM 14245 / SRS30216</strain>
    </source>
</reference>
<proteinExistence type="inferred from homology"/>
<evidence type="ECO:0000255" key="1">
    <source>
        <dbReference type="HAMAP-Rule" id="MF_01569"/>
    </source>
</evidence>
<comment type="function">
    <text evidence="1">Catalyzes the attachment of proline to tRNA(Pro) in a two-step reaction: proline is first activated by ATP to form Pro-AMP and then transferred to the acceptor end of tRNA(Pro). As ProRS can inadvertently accommodate and process non-cognate amino acids such as alanine and cysteine, to avoid such errors it has two additional distinct editing activities against alanine. One activity is designated as 'pretransfer' editing and involves the tRNA(Pro)-independent hydrolysis of activated Ala-AMP. The other activity is designated 'posttransfer' editing and involves deacylation of mischarged Ala-tRNA(Pro). The misacylated Cys-tRNA(Pro) is not edited by ProRS.</text>
</comment>
<comment type="catalytic activity">
    <reaction evidence="1">
        <text>tRNA(Pro) + L-proline + ATP = L-prolyl-tRNA(Pro) + AMP + diphosphate</text>
        <dbReference type="Rhea" id="RHEA:14305"/>
        <dbReference type="Rhea" id="RHEA-COMP:9700"/>
        <dbReference type="Rhea" id="RHEA-COMP:9702"/>
        <dbReference type="ChEBI" id="CHEBI:30616"/>
        <dbReference type="ChEBI" id="CHEBI:33019"/>
        <dbReference type="ChEBI" id="CHEBI:60039"/>
        <dbReference type="ChEBI" id="CHEBI:78442"/>
        <dbReference type="ChEBI" id="CHEBI:78532"/>
        <dbReference type="ChEBI" id="CHEBI:456215"/>
        <dbReference type="EC" id="6.1.1.15"/>
    </reaction>
</comment>
<comment type="subunit">
    <text evidence="1">Homodimer.</text>
</comment>
<comment type="subcellular location">
    <subcellularLocation>
        <location evidence="1">Cytoplasm</location>
    </subcellularLocation>
</comment>
<comment type="domain">
    <text evidence="1">Consists of three domains: the N-terminal catalytic domain, the editing domain and the C-terminal anticodon-binding domain.</text>
</comment>
<comment type="similarity">
    <text evidence="1">Belongs to the class-II aminoacyl-tRNA synthetase family. ProS type 1 subfamily.</text>
</comment>
<sequence>MLMRMSTLFLRTLREDPVEAEVASHKLLVRAGYVRRAAPGIYTWLPLGLKVLRKVEQVVREEMDAAGAQEVHFPALLPREPYEATNRWSDYGDGIFKLKDRKGADYLLAPTHEEMFTLLVKDLYSSYKDLPLSIYQIQTKYRDEARPRAGIIRGREFTMKDSYSFDVDDAGLERSYELHRQAYVRIFERLGLDFVIVSAVSGAMGGSRSEEFLHPTAIGEDTFVRSPGGYAANAEAVTTLAPPAVPFDGLPAAHVEDTPDTPTIETLVAVSNEKHPRADRPWTAADTLKNVFVVLRHPDGTREPLAVGVPGDREVDPKRLEAAVSPAEVEAFEAADFAKHPALVKGYIGPGVLGTEGASGIRYLVDPRVVDGTAWITGADAEGRHVFDLVAGRDFTPDGFVEAAEVKAGDPAPDGSGPLELARGIEIAHIFALGRRFAQALDLKVLDENGKQVVVTMGSYGVGVTRALACVAEGNHDEKGLVWPRALAPADVHVVATGKDPEIFATAERLAGELVAQGLEVLYDDRPKVSPGVKFKDAELIGVPTILVVGKGLAEGLVELKDRRSGDSEQVALDDAVSRVATAVRG</sequence>
<accession>A6W7Y5</accession>
<gene>
    <name evidence="1" type="primary">proS</name>
    <name type="ordered locus">Krad_1436</name>
</gene>
<keyword id="KW-0030">Aminoacyl-tRNA synthetase</keyword>
<keyword id="KW-0067">ATP-binding</keyword>
<keyword id="KW-0963">Cytoplasm</keyword>
<keyword id="KW-0436">Ligase</keyword>
<keyword id="KW-0547">Nucleotide-binding</keyword>
<keyword id="KW-0648">Protein biosynthesis</keyword>
<keyword id="KW-1185">Reference proteome</keyword>
<protein>
    <recommendedName>
        <fullName evidence="1">Proline--tRNA ligase</fullName>
        <ecNumber evidence="1">6.1.1.15</ecNumber>
    </recommendedName>
    <alternativeName>
        <fullName evidence="1">Prolyl-tRNA synthetase</fullName>
        <shortName evidence="1">ProRS</shortName>
    </alternativeName>
</protein>
<feature type="chain" id="PRO_1000087842" description="Proline--tRNA ligase">
    <location>
        <begin position="1"/>
        <end position="586"/>
    </location>
</feature>
<dbReference type="EC" id="6.1.1.15" evidence="1"/>
<dbReference type="EMBL" id="CP000750">
    <property type="protein sequence ID" value="ABS02924.1"/>
    <property type="molecule type" value="Genomic_DNA"/>
</dbReference>
<dbReference type="SMR" id="A6W7Y5"/>
<dbReference type="STRING" id="266940.Krad_1436"/>
<dbReference type="KEGG" id="kra:Krad_1436"/>
<dbReference type="eggNOG" id="COG0442">
    <property type="taxonomic scope" value="Bacteria"/>
</dbReference>
<dbReference type="HOGENOM" id="CLU_016739_0_0_11"/>
<dbReference type="OrthoDB" id="9809052at2"/>
<dbReference type="Proteomes" id="UP000001116">
    <property type="component" value="Chromosome"/>
</dbReference>
<dbReference type="GO" id="GO:0005829">
    <property type="term" value="C:cytosol"/>
    <property type="evidence" value="ECO:0007669"/>
    <property type="project" value="TreeGrafter"/>
</dbReference>
<dbReference type="GO" id="GO:0002161">
    <property type="term" value="F:aminoacyl-tRNA deacylase activity"/>
    <property type="evidence" value="ECO:0007669"/>
    <property type="project" value="InterPro"/>
</dbReference>
<dbReference type="GO" id="GO:0005524">
    <property type="term" value="F:ATP binding"/>
    <property type="evidence" value="ECO:0007669"/>
    <property type="project" value="UniProtKB-UniRule"/>
</dbReference>
<dbReference type="GO" id="GO:0004827">
    <property type="term" value="F:proline-tRNA ligase activity"/>
    <property type="evidence" value="ECO:0007669"/>
    <property type="project" value="UniProtKB-UniRule"/>
</dbReference>
<dbReference type="GO" id="GO:0006433">
    <property type="term" value="P:prolyl-tRNA aminoacylation"/>
    <property type="evidence" value="ECO:0007669"/>
    <property type="project" value="UniProtKB-UniRule"/>
</dbReference>
<dbReference type="CDD" id="cd00861">
    <property type="entry name" value="ProRS_anticodon_short"/>
    <property type="match status" value="1"/>
</dbReference>
<dbReference type="CDD" id="cd00779">
    <property type="entry name" value="ProRS_core_prok"/>
    <property type="match status" value="1"/>
</dbReference>
<dbReference type="FunFam" id="3.30.930.10:FF:000066">
    <property type="entry name" value="Proline--tRNA ligase"/>
    <property type="match status" value="1"/>
</dbReference>
<dbReference type="Gene3D" id="3.40.50.800">
    <property type="entry name" value="Anticodon-binding domain"/>
    <property type="match status" value="1"/>
</dbReference>
<dbReference type="Gene3D" id="3.30.930.10">
    <property type="entry name" value="Bira Bifunctional Protein, Domain 2"/>
    <property type="match status" value="2"/>
</dbReference>
<dbReference type="Gene3D" id="3.90.960.10">
    <property type="entry name" value="YbaK/aminoacyl-tRNA synthetase-associated domain"/>
    <property type="match status" value="1"/>
</dbReference>
<dbReference type="HAMAP" id="MF_01569">
    <property type="entry name" value="Pro_tRNA_synth_type1"/>
    <property type="match status" value="1"/>
</dbReference>
<dbReference type="InterPro" id="IPR002314">
    <property type="entry name" value="aa-tRNA-synt_IIb"/>
</dbReference>
<dbReference type="InterPro" id="IPR006195">
    <property type="entry name" value="aa-tRNA-synth_II"/>
</dbReference>
<dbReference type="InterPro" id="IPR045864">
    <property type="entry name" value="aa-tRNA-synth_II/BPL/LPL"/>
</dbReference>
<dbReference type="InterPro" id="IPR004154">
    <property type="entry name" value="Anticodon-bd"/>
</dbReference>
<dbReference type="InterPro" id="IPR036621">
    <property type="entry name" value="Anticodon-bd_dom_sf"/>
</dbReference>
<dbReference type="InterPro" id="IPR002316">
    <property type="entry name" value="Pro-tRNA-ligase_IIa"/>
</dbReference>
<dbReference type="InterPro" id="IPR004500">
    <property type="entry name" value="Pro-tRNA-synth_IIa_bac-type"/>
</dbReference>
<dbReference type="InterPro" id="IPR023717">
    <property type="entry name" value="Pro-tRNA-Synthase_IIa_type1"/>
</dbReference>
<dbReference type="InterPro" id="IPR050062">
    <property type="entry name" value="Pro-tRNA_synthetase"/>
</dbReference>
<dbReference type="InterPro" id="IPR044140">
    <property type="entry name" value="ProRS_anticodon_short"/>
</dbReference>
<dbReference type="InterPro" id="IPR033730">
    <property type="entry name" value="ProRS_core_prok"/>
</dbReference>
<dbReference type="InterPro" id="IPR036754">
    <property type="entry name" value="YbaK/aa-tRNA-synt-asso_dom_sf"/>
</dbReference>
<dbReference type="InterPro" id="IPR007214">
    <property type="entry name" value="YbaK/aa-tRNA-synth-assoc-dom"/>
</dbReference>
<dbReference type="NCBIfam" id="NF006625">
    <property type="entry name" value="PRK09194.1"/>
    <property type="match status" value="1"/>
</dbReference>
<dbReference type="NCBIfam" id="TIGR00409">
    <property type="entry name" value="proS_fam_II"/>
    <property type="match status" value="1"/>
</dbReference>
<dbReference type="PANTHER" id="PTHR42753">
    <property type="entry name" value="MITOCHONDRIAL RIBOSOME PROTEIN L39/PROLYL-TRNA LIGASE FAMILY MEMBER"/>
    <property type="match status" value="1"/>
</dbReference>
<dbReference type="PANTHER" id="PTHR42753:SF2">
    <property type="entry name" value="PROLINE--TRNA LIGASE"/>
    <property type="match status" value="1"/>
</dbReference>
<dbReference type="Pfam" id="PF03129">
    <property type="entry name" value="HGTP_anticodon"/>
    <property type="match status" value="1"/>
</dbReference>
<dbReference type="Pfam" id="PF00587">
    <property type="entry name" value="tRNA-synt_2b"/>
    <property type="match status" value="1"/>
</dbReference>
<dbReference type="Pfam" id="PF04073">
    <property type="entry name" value="tRNA_edit"/>
    <property type="match status" value="1"/>
</dbReference>
<dbReference type="PRINTS" id="PR01046">
    <property type="entry name" value="TRNASYNTHPRO"/>
</dbReference>
<dbReference type="SUPFAM" id="SSF52954">
    <property type="entry name" value="Class II aaRS ABD-related"/>
    <property type="match status" value="1"/>
</dbReference>
<dbReference type="SUPFAM" id="SSF55681">
    <property type="entry name" value="Class II aaRS and biotin synthetases"/>
    <property type="match status" value="1"/>
</dbReference>
<dbReference type="SUPFAM" id="SSF55826">
    <property type="entry name" value="YbaK/ProRS associated domain"/>
    <property type="match status" value="1"/>
</dbReference>
<dbReference type="PROSITE" id="PS50862">
    <property type="entry name" value="AA_TRNA_LIGASE_II"/>
    <property type="match status" value="1"/>
</dbReference>